<reference evidence="3" key="1">
    <citation type="submission" date="2002-03" db="UniProtKB">
        <title>Structural analysis of earthworm serine proteases.</title>
        <authorList>
            <person name="Nakajima N."/>
            <person name="Sugimoto M."/>
        </authorList>
    </citation>
    <scope>PROTEIN SEQUENCE</scope>
</reference>
<protein>
    <recommendedName>
        <fullName>Fibrinolytic enzyme, isozyme C</fullName>
        <shortName>F-II</shortName>
        <ecNumber>3.4.21.-</ecNumber>
    </recommendedName>
</protein>
<name>FIBC_LUMRU</name>
<accession>P83298</accession>
<keyword id="KW-0903">Direct protein sequencing</keyword>
<keyword id="KW-1015">Disulfide bond</keyword>
<keyword id="KW-1205">Fibrinolytic toxin</keyword>
<keyword id="KW-1199">Hemostasis impairing toxin</keyword>
<keyword id="KW-0378">Hydrolase</keyword>
<keyword id="KW-0645">Protease</keyword>
<keyword id="KW-0720">Serine protease</keyword>
<keyword id="KW-0800">Toxin</keyword>
<dbReference type="EC" id="3.4.21.-"/>
<dbReference type="PIR" id="PN0655">
    <property type="entry name" value="PN0655"/>
</dbReference>
<dbReference type="SMR" id="P83298"/>
<dbReference type="GO" id="GO:0004252">
    <property type="term" value="F:serine-type endopeptidase activity"/>
    <property type="evidence" value="ECO:0007669"/>
    <property type="project" value="InterPro"/>
</dbReference>
<dbReference type="GO" id="GO:0090729">
    <property type="term" value="F:toxin activity"/>
    <property type="evidence" value="ECO:0007669"/>
    <property type="project" value="UniProtKB-KW"/>
</dbReference>
<dbReference type="GO" id="GO:0006508">
    <property type="term" value="P:proteolysis"/>
    <property type="evidence" value="ECO:0007669"/>
    <property type="project" value="UniProtKB-KW"/>
</dbReference>
<dbReference type="CDD" id="cd00190">
    <property type="entry name" value="Tryp_SPc"/>
    <property type="match status" value="1"/>
</dbReference>
<dbReference type="FunFam" id="2.40.10.10:FF:000068">
    <property type="entry name" value="transmembrane protease serine 2"/>
    <property type="match status" value="1"/>
</dbReference>
<dbReference type="FunFam" id="2.40.10.10:FF:000036">
    <property type="entry name" value="Trypsin beta"/>
    <property type="match status" value="1"/>
</dbReference>
<dbReference type="Gene3D" id="2.40.10.10">
    <property type="entry name" value="Trypsin-like serine proteases"/>
    <property type="match status" value="2"/>
</dbReference>
<dbReference type="InterPro" id="IPR009003">
    <property type="entry name" value="Peptidase_S1_PA"/>
</dbReference>
<dbReference type="InterPro" id="IPR043504">
    <property type="entry name" value="Peptidase_S1_PA_chymotrypsin"/>
</dbReference>
<dbReference type="InterPro" id="IPR001314">
    <property type="entry name" value="Peptidase_S1A"/>
</dbReference>
<dbReference type="InterPro" id="IPR001254">
    <property type="entry name" value="Trypsin_dom"/>
</dbReference>
<dbReference type="InterPro" id="IPR018114">
    <property type="entry name" value="TRYPSIN_HIS"/>
</dbReference>
<dbReference type="InterPro" id="IPR033116">
    <property type="entry name" value="TRYPSIN_SER"/>
</dbReference>
<dbReference type="PANTHER" id="PTHR24252">
    <property type="entry name" value="ACROSIN-RELATED"/>
    <property type="match status" value="1"/>
</dbReference>
<dbReference type="PANTHER" id="PTHR24252:SF7">
    <property type="entry name" value="HYALIN"/>
    <property type="match status" value="1"/>
</dbReference>
<dbReference type="Pfam" id="PF00089">
    <property type="entry name" value="Trypsin"/>
    <property type="match status" value="1"/>
</dbReference>
<dbReference type="PRINTS" id="PR00722">
    <property type="entry name" value="CHYMOTRYPSIN"/>
</dbReference>
<dbReference type="SMART" id="SM00020">
    <property type="entry name" value="Tryp_SPc"/>
    <property type="match status" value="1"/>
</dbReference>
<dbReference type="SUPFAM" id="SSF50494">
    <property type="entry name" value="Trypsin-like serine proteases"/>
    <property type="match status" value="1"/>
</dbReference>
<dbReference type="PROSITE" id="PS50240">
    <property type="entry name" value="TRYPSIN_DOM"/>
    <property type="match status" value="1"/>
</dbReference>
<dbReference type="PROSITE" id="PS00134">
    <property type="entry name" value="TRYPSIN_HIS"/>
    <property type="match status" value="1"/>
</dbReference>
<dbReference type="PROSITE" id="PS00135">
    <property type="entry name" value="TRYPSIN_SER"/>
    <property type="match status" value="1"/>
</dbReference>
<evidence type="ECO:0000250" key="1"/>
<evidence type="ECO:0000255" key="2">
    <source>
        <dbReference type="PROSITE-ProRule" id="PRU00274"/>
    </source>
</evidence>
<evidence type="ECO:0000305" key="3"/>
<organism evidence="3">
    <name type="scientific">Lumbricus rubellus</name>
    <name type="common">Humus earthworm</name>
    <dbReference type="NCBI Taxonomy" id="35632"/>
    <lineage>
        <taxon>Eukaryota</taxon>
        <taxon>Metazoa</taxon>
        <taxon>Spiralia</taxon>
        <taxon>Lophotrochozoa</taxon>
        <taxon>Annelida</taxon>
        <taxon>Clitellata</taxon>
        <taxon>Oligochaeta</taxon>
        <taxon>Crassiclitellata</taxon>
        <taxon>Lumbricina</taxon>
        <taxon>Lumbricidae</taxon>
        <taxon>Lumbricinae</taxon>
        <taxon>Lumbricus</taxon>
    </lineage>
</organism>
<comment type="miscellaneous">
    <text evidence="3">In L.rubellus there are at least three isozymes of fibrinolytic enzyme.</text>
</comment>
<comment type="similarity">
    <text evidence="2">Belongs to the peptidase S1 family.</text>
</comment>
<feature type="chain" id="PRO_0000088689" description="Fibrinolytic enzyme, isozyme C">
    <location>
        <begin position="1"/>
        <end position="242"/>
    </location>
</feature>
<feature type="domain" description="Peptidase S1" evidence="2">
    <location>
        <begin position="1"/>
        <end position="242"/>
    </location>
</feature>
<feature type="active site" description="Charge relay system" evidence="1">
    <location>
        <position position="44"/>
    </location>
</feature>
<feature type="active site" description="Charge relay system" evidence="1">
    <location>
        <position position="93"/>
    </location>
</feature>
<feature type="active site" description="Charge relay system" evidence="1">
    <location>
        <position position="191"/>
    </location>
</feature>
<feature type="disulfide bond" evidence="2">
    <location>
        <begin position="29"/>
        <end position="45"/>
    </location>
</feature>
<feature type="disulfide bond" evidence="2">
    <location>
        <begin position="127"/>
        <end position="197"/>
    </location>
</feature>
<feature type="disulfide bond" evidence="2">
    <location>
        <begin position="158"/>
        <end position="176"/>
    </location>
</feature>
<feature type="disulfide bond" evidence="2">
    <location>
        <begin position="187"/>
        <end position="219"/>
    </location>
</feature>
<proteinExistence type="evidence at protein level"/>
<sequence>VIGGTNASPGEFPWQLSQQRQSGSWSHSCGASLLSSTSALSASHCVDGVLPNNIRVIAGLWQQSDTSGTQTANVDSYTMHENYGAGTASYSNDIAILHLATSISLGGNIQAAVLPANNNNDYAGTTCVISGWGRTDGTNNLPDILQKSSIPVITTAQCTAAMVGVGGANIWDNHICVQDPAGNTGACNGDSGGPLNCPDGGTRVVGVTSWVVSSGLGTCLPDYPSVYTRVSAYLGWIGDNSR</sequence>